<gene>
    <name evidence="1" type="primary">pyrB</name>
    <name type="ordered locus">SE_0876</name>
</gene>
<sequence>MEHLLSMEHLSNSEIYDLITIACQFKSGERPLPQFNGQYVSNLFFENSTRTKCSFEMAEQKLGLKLINFETSTSSVKKGESLYDTCKTLESIGVDLLVIRHSQNSYYEELDQLNIPIANAGDGSGQHPTQSLLDIMTIYEEYGSFEGLNILICGDIKNSRVARSNYHSLTSLGANVMFSSPKEWVDNTLEAPYVEIDEVIDKVDIVMLLRVQHERHGISGEANFAAEEYHQQFGLTQARYDKLKEEAIVMHPAPVNRGVEIKSELVEAPKSRIFKQMENGMYLRMAVISALLQ</sequence>
<comment type="function">
    <text evidence="1">Catalyzes the condensation of carbamoyl phosphate and aspartate to form carbamoyl aspartate and inorganic phosphate, the committed step in the de novo pyrimidine nucleotide biosynthesis pathway.</text>
</comment>
<comment type="catalytic activity">
    <reaction evidence="1">
        <text>carbamoyl phosphate + L-aspartate = N-carbamoyl-L-aspartate + phosphate + H(+)</text>
        <dbReference type="Rhea" id="RHEA:20013"/>
        <dbReference type="ChEBI" id="CHEBI:15378"/>
        <dbReference type="ChEBI" id="CHEBI:29991"/>
        <dbReference type="ChEBI" id="CHEBI:32814"/>
        <dbReference type="ChEBI" id="CHEBI:43474"/>
        <dbReference type="ChEBI" id="CHEBI:58228"/>
        <dbReference type="EC" id="2.1.3.2"/>
    </reaction>
</comment>
<comment type="pathway">
    <text evidence="1">Pyrimidine metabolism; UMP biosynthesis via de novo pathway; (S)-dihydroorotate from bicarbonate: step 2/3.</text>
</comment>
<comment type="subunit">
    <text evidence="1">Heterododecamer (2C3:3R2) of six catalytic PyrB chains organized as two trimers (C3), and six regulatory PyrI chains organized as three dimers (R2).</text>
</comment>
<comment type="similarity">
    <text evidence="1">Belongs to the aspartate/ornithine carbamoyltransferase superfamily. ATCase family.</text>
</comment>
<name>PYRB_STAES</name>
<reference key="1">
    <citation type="journal article" date="2003" name="Mol. Microbiol.">
        <title>Genome-based analysis of virulence genes in a non-biofilm-forming Staphylococcus epidermidis strain (ATCC 12228).</title>
        <authorList>
            <person name="Zhang Y.-Q."/>
            <person name="Ren S.-X."/>
            <person name="Li H.-L."/>
            <person name="Wang Y.-X."/>
            <person name="Fu G."/>
            <person name="Yang J."/>
            <person name="Qin Z.-Q."/>
            <person name="Miao Y.-G."/>
            <person name="Wang W.-Y."/>
            <person name="Chen R.-S."/>
            <person name="Shen Y."/>
            <person name="Chen Z."/>
            <person name="Yuan Z.-H."/>
            <person name="Zhao G.-P."/>
            <person name="Qu D."/>
            <person name="Danchin A."/>
            <person name="Wen Y.-M."/>
        </authorList>
    </citation>
    <scope>NUCLEOTIDE SEQUENCE [LARGE SCALE GENOMIC DNA]</scope>
    <source>
        <strain>ATCC 12228 / FDA PCI 1200</strain>
    </source>
</reference>
<dbReference type="EC" id="2.1.3.2" evidence="1"/>
<dbReference type="EMBL" id="AE015929">
    <property type="protein sequence ID" value="AAO04473.1"/>
    <property type="molecule type" value="Genomic_DNA"/>
</dbReference>
<dbReference type="RefSeq" id="NP_764431.1">
    <property type="nucleotide sequence ID" value="NC_004461.1"/>
</dbReference>
<dbReference type="RefSeq" id="WP_001830068.1">
    <property type="nucleotide sequence ID" value="NZ_WBME01000063.1"/>
</dbReference>
<dbReference type="SMR" id="Q8CPJ7"/>
<dbReference type="KEGG" id="sep:SE_0876"/>
<dbReference type="PATRIC" id="fig|176280.10.peg.848"/>
<dbReference type="eggNOG" id="COG0540">
    <property type="taxonomic scope" value="Bacteria"/>
</dbReference>
<dbReference type="HOGENOM" id="CLU_043846_2_1_9"/>
<dbReference type="OrthoDB" id="9774690at2"/>
<dbReference type="UniPathway" id="UPA00070">
    <property type="reaction ID" value="UER00116"/>
</dbReference>
<dbReference type="Proteomes" id="UP000001411">
    <property type="component" value="Chromosome"/>
</dbReference>
<dbReference type="GO" id="GO:0005829">
    <property type="term" value="C:cytosol"/>
    <property type="evidence" value="ECO:0007669"/>
    <property type="project" value="TreeGrafter"/>
</dbReference>
<dbReference type="GO" id="GO:0016597">
    <property type="term" value="F:amino acid binding"/>
    <property type="evidence" value="ECO:0007669"/>
    <property type="project" value="InterPro"/>
</dbReference>
<dbReference type="GO" id="GO:0004070">
    <property type="term" value="F:aspartate carbamoyltransferase activity"/>
    <property type="evidence" value="ECO:0007669"/>
    <property type="project" value="UniProtKB-UniRule"/>
</dbReference>
<dbReference type="GO" id="GO:0006207">
    <property type="term" value="P:'de novo' pyrimidine nucleobase biosynthetic process"/>
    <property type="evidence" value="ECO:0007669"/>
    <property type="project" value="InterPro"/>
</dbReference>
<dbReference type="GO" id="GO:0044205">
    <property type="term" value="P:'de novo' UMP biosynthetic process"/>
    <property type="evidence" value="ECO:0007669"/>
    <property type="project" value="UniProtKB-UniRule"/>
</dbReference>
<dbReference type="GO" id="GO:0006520">
    <property type="term" value="P:amino acid metabolic process"/>
    <property type="evidence" value="ECO:0007669"/>
    <property type="project" value="InterPro"/>
</dbReference>
<dbReference type="FunFam" id="3.40.50.1370:FF:000011">
    <property type="entry name" value="Aspartate carbamoyltransferase"/>
    <property type="match status" value="1"/>
</dbReference>
<dbReference type="Gene3D" id="3.40.50.1370">
    <property type="entry name" value="Aspartate/ornithine carbamoyltransferase"/>
    <property type="match status" value="2"/>
</dbReference>
<dbReference type="HAMAP" id="MF_00001">
    <property type="entry name" value="Asp_carb_tr"/>
    <property type="match status" value="1"/>
</dbReference>
<dbReference type="InterPro" id="IPR006132">
    <property type="entry name" value="Asp/Orn_carbamoyltranf_P-bd"/>
</dbReference>
<dbReference type="InterPro" id="IPR006130">
    <property type="entry name" value="Asp/Orn_carbamoylTrfase"/>
</dbReference>
<dbReference type="InterPro" id="IPR036901">
    <property type="entry name" value="Asp/Orn_carbamoylTrfase_sf"/>
</dbReference>
<dbReference type="InterPro" id="IPR002082">
    <property type="entry name" value="Asp_carbamoyltransf"/>
</dbReference>
<dbReference type="InterPro" id="IPR006131">
    <property type="entry name" value="Asp_carbamoyltransf_Asp/Orn-bd"/>
</dbReference>
<dbReference type="NCBIfam" id="TIGR00670">
    <property type="entry name" value="asp_carb_tr"/>
    <property type="match status" value="1"/>
</dbReference>
<dbReference type="NCBIfam" id="NF002032">
    <property type="entry name" value="PRK00856.1"/>
    <property type="match status" value="1"/>
</dbReference>
<dbReference type="PANTHER" id="PTHR45753:SF6">
    <property type="entry name" value="ASPARTATE CARBAMOYLTRANSFERASE"/>
    <property type="match status" value="1"/>
</dbReference>
<dbReference type="PANTHER" id="PTHR45753">
    <property type="entry name" value="ORNITHINE CARBAMOYLTRANSFERASE, MITOCHONDRIAL"/>
    <property type="match status" value="1"/>
</dbReference>
<dbReference type="Pfam" id="PF00185">
    <property type="entry name" value="OTCace"/>
    <property type="match status" value="1"/>
</dbReference>
<dbReference type="Pfam" id="PF02729">
    <property type="entry name" value="OTCace_N"/>
    <property type="match status" value="1"/>
</dbReference>
<dbReference type="PRINTS" id="PR00100">
    <property type="entry name" value="AOTCASE"/>
</dbReference>
<dbReference type="PRINTS" id="PR00101">
    <property type="entry name" value="ATCASE"/>
</dbReference>
<dbReference type="SUPFAM" id="SSF53671">
    <property type="entry name" value="Aspartate/ornithine carbamoyltransferase"/>
    <property type="match status" value="1"/>
</dbReference>
<dbReference type="PROSITE" id="PS00097">
    <property type="entry name" value="CARBAMOYLTRANSFERASE"/>
    <property type="match status" value="1"/>
</dbReference>
<feature type="chain" id="PRO_0000113199" description="Aspartate carbamoyltransferase catalytic subunit">
    <location>
        <begin position="1"/>
        <end position="293"/>
    </location>
</feature>
<feature type="binding site" evidence="1">
    <location>
        <position position="50"/>
    </location>
    <ligand>
        <name>carbamoyl phosphate</name>
        <dbReference type="ChEBI" id="CHEBI:58228"/>
    </ligand>
</feature>
<feature type="binding site" evidence="1">
    <location>
        <position position="51"/>
    </location>
    <ligand>
        <name>carbamoyl phosphate</name>
        <dbReference type="ChEBI" id="CHEBI:58228"/>
    </ligand>
</feature>
<feature type="binding site" evidence="1">
    <location>
        <position position="78"/>
    </location>
    <ligand>
        <name>L-aspartate</name>
        <dbReference type="ChEBI" id="CHEBI:29991"/>
    </ligand>
</feature>
<feature type="binding site" evidence="1">
    <location>
        <position position="100"/>
    </location>
    <ligand>
        <name>carbamoyl phosphate</name>
        <dbReference type="ChEBI" id="CHEBI:58228"/>
    </ligand>
</feature>
<feature type="binding site" evidence="1">
    <location>
        <position position="127"/>
    </location>
    <ligand>
        <name>carbamoyl phosphate</name>
        <dbReference type="ChEBI" id="CHEBI:58228"/>
    </ligand>
</feature>
<feature type="binding site" evidence="1">
    <location>
        <position position="130"/>
    </location>
    <ligand>
        <name>carbamoyl phosphate</name>
        <dbReference type="ChEBI" id="CHEBI:58228"/>
    </ligand>
</feature>
<feature type="binding site" evidence="1">
    <location>
        <position position="160"/>
    </location>
    <ligand>
        <name>L-aspartate</name>
        <dbReference type="ChEBI" id="CHEBI:29991"/>
    </ligand>
</feature>
<feature type="binding site" evidence="1">
    <location>
        <position position="210"/>
    </location>
    <ligand>
        <name>L-aspartate</name>
        <dbReference type="ChEBI" id="CHEBI:29991"/>
    </ligand>
</feature>
<feature type="binding site" evidence="1">
    <location>
        <position position="253"/>
    </location>
    <ligand>
        <name>carbamoyl phosphate</name>
        <dbReference type="ChEBI" id="CHEBI:58228"/>
    </ligand>
</feature>
<feature type="binding site" evidence="1">
    <location>
        <position position="254"/>
    </location>
    <ligand>
        <name>carbamoyl phosphate</name>
        <dbReference type="ChEBI" id="CHEBI:58228"/>
    </ligand>
</feature>
<evidence type="ECO:0000255" key="1">
    <source>
        <dbReference type="HAMAP-Rule" id="MF_00001"/>
    </source>
</evidence>
<accession>Q8CPJ7</accession>
<organism>
    <name type="scientific">Staphylococcus epidermidis (strain ATCC 12228 / FDA PCI 1200)</name>
    <dbReference type="NCBI Taxonomy" id="176280"/>
    <lineage>
        <taxon>Bacteria</taxon>
        <taxon>Bacillati</taxon>
        <taxon>Bacillota</taxon>
        <taxon>Bacilli</taxon>
        <taxon>Bacillales</taxon>
        <taxon>Staphylococcaceae</taxon>
        <taxon>Staphylococcus</taxon>
    </lineage>
</organism>
<proteinExistence type="inferred from homology"/>
<keyword id="KW-0665">Pyrimidine biosynthesis</keyword>
<keyword id="KW-0808">Transferase</keyword>
<protein>
    <recommendedName>
        <fullName evidence="1">Aspartate carbamoyltransferase catalytic subunit</fullName>
        <ecNumber evidence="1">2.1.3.2</ecNumber>
    </recommendedName>
    <alternativeName>
        <fullName evidence="1">Aspartate transcarbamylase</fullName>
        <shortName evidence="1">ATCase</shortName>
    </alternativeName>
</protein>